<accession>Q5EA66</accession>
<accession>B2Z4B5</accession>
<organism>
    <name type="scientific">Bos taurus</name>
    <name type="common">Bovine</name>
    <dbReference type="NCBI Taxonomy" id="9913"/>
    <lineage>
        <taxon>Eukaryota</taxon>
        <taxon>Metazoa</taxon>
        <taxon>Chordata</taxon>
        <taxon>Craniata</taxon>
        <taxon>Vertebrata</taxon>
        <taxon>Euteleostomi</taxon>
        <taxon>Mammalia</taxon>
        <taxon>Eutheria</taxon>
        <taxon>Laurasiatheria</taxon>
        <taxon>Artiodactyla</taxon>
        <taxon>Ruminantia</taxon>
        <taxon>Pecora</taxon>
        <taxon>Bovidae</taxon>
        <taxon>Bovinae</taxon>
        <taxon>Bos</taxon>
    </lineage>
</organism>
<dbReference type="EMBL" id="EU599230">
    <property type="protein sequence ID" value="ACD50906.1"/>
    <property type="molecule type" value="mRNA"/>
</dbReference>
<dbReference type="EMBL" id="EU599236">
    <property type="protein sequence ID" value="ACD50912.1"/>
    <property type="molecule type" value="Genomic_DNA"/>
</dbReference>
<dbReference type="EMBL" id="BT020703">
    <property type="protein sequence ID" value="AAX08720.1"/>
    <property type="molecule type" value="mRNA"/>
</dbReference>
<dbReference type="RefSeq" id="NP_001014909.1">
    <property type="nucleotide sequence ID" value="NM_001014909.1"/>
</dbReference>
<dbReference type="SMR" id="Q5EA66"/>
<dbReference type="FunCoup" id="Q5EA66">
    <property type="interactions" value="45"/>
</dbReference>
<dbReference type="STRING" id="9913.ENSBTAP00000020392"/>
<dbReference type="GlyCosmos" id="Q5EA66">
    <property type="glycosylation" value="3 sites, No reported glycans"/>
</dbReference>
<dbReference type="GlyGen" id="Q5EA66">
    <property type="glycosylation" value="3 sites"/>
</dbReference>
<dbReference type="PaxDb" id="9913-ENSBTAP00000020392"/>
<dbReference type="Ensembl" id="ENSBTAT00000020392.3">
    <property type="protein sequence ID" value="ENSBTAP00000020392.2"/>
    <property type="gene ID" value="ENSBTAG00000015340.3"/>
</dbReference>
<dbReference type="GeneID" id="512698"/>
<dbReference type="KEGG" id="bta:512698"/>
<dbReference type="CTD" id="10218"/>
<dbReference type="VEuPathDB" id="HostDB:ENSBTAG00000015340"/>
<dbReference type="VGNC" id="VGNC:25895">
    <property type="gene designation" value="ANGPTL7"/>
</dbReference>
<dbReference type="eggNOG" id="KOG2579">
    <property type="taxonomic scope" value="Eukaryota"/>
</dbReference>
<dbReference type="GeneTree" id="ENSGT00940000157064"/>
<dbReference type="HOGENOM" id="CLU_038628_1_3_1"/>
<dbReference type="InParanoid" id="Q5EA66"/>
<dbReference type="OMA" id="GWHGANY"/>
<dbReference type="OrthoDB" id="9860756at2759"/>
<dbReference type="TreeFam" id="TF329953"/>
<dbReference type="Proteomes" id="UP000009136">
    <property type="component" value="Chromosome 16"/>
</dbReference>
<dbReference type="Bgee" id="ENSBTAG00000015340">
    <property type="expression patterns" value="Expressed in anterior segment of eyeball and 60 other cell types or tissues"/>
</dbReference>
<dbReference type="GO" id="GO:0062023">
    <property type="term" value="C:collagen-containing extracellular matrix"/>
    <property type="evidence" value="ECO:0000318"/>
    <property type="project" value="GO_Central"/>
</dbReference>
<dbReference type="GO" id="GO:0005576">
    <property type="term" value="C:extracellular region"/>
    <property type="evidence" value="ECO:0000250"/>
    <property type="project" value="UniProtKB"/>
</dbReference>
<dbReference type="GO" id="GO:0005615">
    <property type="term" value="C:extracellular space"/>
    <property type="evidence" value="ECO:0000318"/>
    <property type="project" value="GO_Central"/>
</dbReference>
<dbReference type="GO" id="GO:0042802">
    <property type="term" value="F:identical protein binding"/>
    <property type="evidence" value="ECO:0007669"/>
    <property type="project" value="Ensembl"/>
</dbReference>
<dbReference type="GO" id="GO:0007596">
    <property type="term" value="P:blood coagulation"/>
    <property type="evidence" value="ECO:0007669"/>
    <property type="project" value="InterPro"/>
</dbReference>
<dbReference type="GO" id="GO:1901346">
    <property type="term" value="P:negative regulation of vasculature development involved in avascular cornea development in camera-type eye"/>
    <property type="evidence" value="ECO:0000250"/>
    <property type="project" value="UniProtKB"/>
</dbReference>
<dbReference type="GO" id="GO:1903053">
    <property type="term" value="P:regulation of extracellular matrix organization"/>
    <property type="evidence" value="ECO:0000250"/>
    <property type="project" value="UniProtKB"/>
</dbReference>
<dbReference type="CDD" id="cd00087">
    <property type="entry name" value="FReD"/>
    <property type="match status" value="1"/>
</dbReference>
<dbReference type="FunFam" id="3.90.215.10:FF:000001">
    <property type="entry name" value="Tenascin isoform 1"/>
    <property type="match status" value="1"/>
</dbReference>
<dbReference type="Gene3D" id="3.90.215.10">
    <property type="entry name" value="Gamma Fibrinogen, chain A, domain 1"/>
    <property type="match status" value="1"/>
</dbReference>
<dbReference type="InterPro" id="IPR037579">
    <property type="entry name" value="FIB_ANG-like"/>
</dbReference>
<dbReference type="InterPro" id="IPR036056">
    <property type="entry name" value="Fibrinogen-like_C"/>
</dbReference>
<dbReference type="InterPro" id="IPR014716">
    <property type="entry name" value="Fibrinogen_a/b/g_C_1"/>
</dbReference>
<dbReference type="InterPro" id="IPR002181">
    <property type="entry name" value="Fibrinogen_a/b/g_C_dom"/>
</dbReference>
<dbReference type="NCBIfam" id="NF040941">
    <property type="entry name" value="GGGWT_bact"/>
    <property type="match status" value="1"/>
</dbReference>
<dbReference type="PANTHER" id="PTHR47221">
    <property type="entry name" value="FIBRINOGEN ALPHA CHAIN"/>
    <property type="match status" value="1"/>
</dbReference>
<dbReference type="PANTHER" id="PTHR47221:SF6">
    <property type="entry name" value="FIBRINOGEN ALPHA CHAIN"/>
    <property type="match status" value="1"/>
</dbReference>
<dbReference type="Pfam" id="PF00147">
    <property type="entry name" value="Fibrinogen_C"/>
    <property type="match status" value="1"/>
</dbReference>
<dbReference type="SMART" id="SM00186">
    <property type="entry name" value="FBG"/>
    <property type="match status" value="1"/>
</dbReference>
<dbReference type="SUPFAM" id="SSF56496">
    <property type="entry name" value="Fibrinogen C-terminal domain-like"/>
    <property type="match status" value="1"/>
</dbReference>
<dbReference type="PROSITE" id="PS51406">
    <property type="entry name" value="FIBRINOGEN_C_2"/>
    <property type="match status" value="1"/>
</dbReference>
<comment type="function">
    <text evidence="2">Has a role in the formation and organization of the extracellular matrix. In the eye, it functions as a mediator of dexamethasone-induced matrix deposition in the trabecular meshwork, the tissue responsible for the outflow of the ocular aqueous humor and for the maintenance of intraocular pressure. Is a negative regulator of angiogenesis in the cornea, and plays a major role in maintaining corneal avascularity and transparency.</text>
</comment>
<comment type="subunit">
    <text evidence="2">Homotetramer; disulfide-linked.</text>
</comment>
<comment type="subcellular location">
    <subcellularLocation>
        <location evidence="2">Secreted</location>
    </subcellularLocation>
</comment>
<gene>
    <name type="primary">ANGPTL7</name>
</gene>
<protein>
    <recommendedName>
        <fullName>Angiopoietin-related protein 7</fullName>
    </recommendedName>
    <alternativeName>
        <fullName>Angiopoietin-like protein 7</fullName>
    </alternativeName>
</protein>
<name>ANGL7_BOVIN</name>
<sequence length="344" mass="39457">MLKKTLSAVAWLCIFLVAFVSHPVWPQKPPKRKTPAELTAATCCEEAKALQAQIANLSSLLSDLGKKQERDWVSVVMQVMELESSAKSMETRLTEAESKYSEMNNQIGIMQLQAAQTVTQTSADAIYDCSSLYQKNYRISGVYKLPPDDFLGSPELEVFCDMETSGGGWTIIQRRKSGLVSFYRDWKQYKQGFGSIRGDFWLGNDHIHRLSRRPTRLRVEMQDWEGNMRYAEYSHFVLGNELNSYRLFLGNYSGDVGNDALIYHNNTAFSTKDKDNDNCLDKCAQLRKGGYWYNCCTDSNLNGVYYRLGEHNKHLDGITWYGWHGSSYSLKRVEMKIRPEDFQP</sequence>
<reference key="1">
    <citation type="submission" date="2008-03" db="EMBL/GenBank/DDBJ databases">
        <title>Genomic structure of Bos taurus angiopoietin-like proteins.</title>
        <authorList>
            <person name="Shui Y."/>
        </authorList>
    </citation>
    <scope>NUCLEOTIDE SEQUENCE [GENOMIC DNA / MRNA]</scope>
</reference>
<reference key="2">
    <citation type="journal article" date="2005" name="BMC Genomics">
        <title>Characterization of 954 bovine full-CDS cDNA sequences.</title>
        <authorList>
            <person name="Harhay G.P."/>
            <person name="Sonstegard T.S."/>
            <person name="Keele J.W."/>
            <person name="Heaton M.P."/>
            <person name="Clawson M.L."/>
            <person name="Snelling W.M."/>
            <person name="Wiedmann R.T."/>
            <person name="Van Tassell C.P."/>
            <person name="Smith T.P.L."/>
        </authorList>
    </citation>
    <scope>NUCLEOTIDE SEQUENCE [LARGE SCALE MRNA]</scope>
</reference>
<proteinExistence type="evidence at transcript level"/>
<evidence type="ECO:0000250" key="1"/>
<evidence type="ECO:0000250" key="2">
    <source>
        <dbReference type="UniProtKB" id="O43827"/>
    </source>
</evidence>
<evidence type="ECO:0000255" key="3"/>
<evidence type="ECO:0000255" key="4">
    <source>
        <dbReference type="PROSITE-ProRule" id="PRU00739"/>
    </source>
</evidence>
<keyword id="KW-0175">Coiled coil</keyword>
<keyword id="KW-1015">Disulfide bond</keyword>
<keyword id="KW-0325">Glycoprotein</keyword>
<keyword id="KW-1185">Reference proteome</keyword>
<keyword id="KW-0964">Secreted</keyword>
<keyword id="KW-0732">Signal</keyword>
<feature type="signal peptide" evidence="1">
    <location>
        <begin position="1"/>
        <end position="26"/>
    </location>
</feature>
<feature type="chain" id="PRO_0000009130" description="Angiopoietin-related protein 7">
    <location>
        <begin position="27"/>
        <end position="344"/>
    </location>
</feature>
<feature type="domain" description="Fibrinogen C-terminal" evidence="4">
    <location>
        <begin position="120"/>
        <end position="341"/>
    </location>
</feature>
<feature type="coiled-coil region" evidence="3">
    <location>
        <begin position="37"/>
        <end position="116"/>
    </location>
</feature>
<feature type="glycosylation site" description="N-linked (GlcNAc...) asparagine" evidence="3">
    <location>
        <position position="56"/>
    </location>
</feature>
<feature type="glycosylation site" description="N-linked (GlcNAc...) asparagine" evidence="3">
    <location>
        <position position="251"/>
    </location>
</feature>
<feature type="glycosylation site" description="N-linked (GlcNAc...) asparagine" evidence="3">
    <location>
        <position position="265"/>
    </location>
</feature>
<feature type="disulfide bond" evidence="4">
    <location>
        <begin position="129"/>
        <end position="160"/>
    </location>
</feature>
<feature type="disulfide bond" evidence="4">
    <location>
        <begin position="283"/>
        <end position="296"/>
    </location>
</feature>